<feature type="chain" id="PRO_0000400220" description="1D-myo-inositol 2-acetamido-2-deoxy-alpha-D-glucopyranoside deacetylase">
    <location>
        <begin position="1"/>
        <end position="308"/>
    </location>
</feature>
<feature type="binding site" evidence="1">
    <location>
        <position position="18"/>
    </location>
    <ligand>
        <name>Zn(2+)</name>
        <dbReference type="ChEBI" id="CHEBI:29105"/>
    </ligand>
</feature>
<feature type="binding site" evidence="1">
    <location>
        <position position="21"/>
    </location>
    <ligand>
        <name>Zn(2+)</name>
        <dbReference type="ChEBI" id="CHEBI:29105"/>
    </ligand>
</feature>
<feature type="binding site" evidence="1">
    <location>
        <position position="153"/>
    </location>
    <ligand>
        <name>Zn(2+)</name>
        <dbReference type="ChEBI" id="CHEBI:29105"/>
    </ligand>
</feature>
<gene>
    <name evidence="1" type="primary">mshB</name>
    <name type="ordered locus">Sare_4145</name>
</gene>
<accession>A8M3H2</accession>
<sequence>MTDVTTLPDRRLLLVHAHPDDEAIGTGATMAHYAATGGHVTLVTCTLGEEGEVHVPELAQLAAAGADQLGGYRIGELAAACRSLGVTDHRFLGGAGRYRDSGMMGLATNEHPRAFWRADLDEAAAHLVELMREVRPQVMVTYDDNGFYGHPDHIQAHRVAMRAYELAAVEGFAPAKVYWTAMPQSVLEAGMVHFAGSSDNPFAGIEEAVELPFCTPDDRIAARIDATGQHAAKEAAMRAHATQIPDNSWLYSIAANFGSEFMGVEYYTLAVGAKGPGAGPYGWEDDLFAGLPVAAGPDRTRAGVTGPW</sequence>
<proteinExistence type="inferred from homology"/>
<organism>
    <name type="scientific">Salinispora arenicola (strain CNS-205)</name>
    <dbReference type="NCBI Taxonomy" id="391037"/>
    <lineage>
        <taxon>Bacteria</taxon>
        <taxon>Bacillati</taxon>
        <taxon>Actinomycetota</taxon>
        <taxon>Actinomycetes</taxon>
        <taxon>Micromonosporales</taxon>
        <taxon>Micromonosporaceae</taxon>
        <taxon>Salinispora</taxon>
    </lineage>
</organism>
<reference key="1">
    <citation type="submission" date="2007-10" db="EMBL/GenBank/DDBJ databases">
        <title>Complete sequence of Salinispora arenicola CNS-205.</title>
        <authorList>
            <consortium name="US DOE Joint Genome Institute"/>
            <person name="Copeland A."/>
            <person name="Lucas S."/>
            <person name="Lapidus A."/>
            <person name="Barry K."/>
            <person name="Glavina del Rio T."/>
            <person name="Dalin E."/>
            <person name="Tice H."/>
            <person name="Pitluck S."/>
            <person name="Foster B."/>
            <person name="Schmutz J."/>
            <person name="Larimer F."/>
            <person name="Land M."/>
            <person name="Hauser L."/>
            <person name="Kyrpides N."/>
            <person name="Ivanova N."/>
            <person name="Jensen P.R."/>
            <person name="Moore B.S."/>
            <person name="Penn K."/>
            <person name="Jenkins C."/>
            <person name="Udwary D."/>
            <person name="Xiang L."/>
            <person name="Gontang E."/>
            <person name="Richardson P."/>
        </authorList>
    </citation>
    <scope>NUCLEOTIDE SEQUENCE [LARGE SCALE GENOMIC DNA]</scope>
    <source>
        <strain>CNS-205</strain>
    </source>
</reference>
<keyword id="KW-0378">Hydrolase</keyword>
<keyword id="KW-0479">Metal-binding</keyword>
<keyword id="KW-0862">Zinc</keyword>
<dbReference type="EC" id="3.5.1.103" evidence="1"/>
<dbReference type="EMBL" id="CP000850">
    <property type="protein sequence ID" value="ABV99935.1"/>
    <property type="molecule type" value="Genomic_DNA"/>
</dbReference>
<dbReference type="SMR" id="A8M3H2"/>
<dbReference type="STRING" id="391037.Sare_4145"/>
<dbReference type="KEGG" id="saq:Sare_4145"/>
<dbReference type="PATRIC" id="fig|391037.6.peg.4185"/>
<dbReference type="eggNOG" id="COG2120">
    <property type="taxonomic scope" value="Bacteria"/>
</dbReference>
<dbReference type="HOGENOM" id="CLU_049311_2_1_11"/>
<dbReference type="OrthoDB" id="158614at2"/>
<dbReference type="GO" id="GO:0035595">
    <property type="term" value="F:N-acetylglucosaminylinositol deacetylase activity"/>
    <property type="evidence" value="ECO:0007669"/>
    <property type="project" value="UniProtKB-EC"/>
</dbReference>
<dbReference type="GO" id="GO:0008270">
    <property type="term" value="F:zinc ion binding"/>
    <property type="evidence" value="ECO:0007669"/>
    <property type="project" value="UniProtKB-UniRule"/>
</dbReference>
<dbReference type="GO" id="GO:0010125">
    <property type="term" value="P:mycothiol biosynthetic process"/>
    <property type="evidence" value="ECO:0007669"/>
    <property type="project" value="UniProtKB-UniRule"/>
</dbReference>
<dbReference type="Gene3D" id="3.40.50.10320">
    <property type="entry name" value="LmbE-like"/>
    <property type="match status" value="1"/>
</dbReference>
<dbReference type="HAMAP" id="MF_01696">
    <property type="entry name" value="MshB"/>
    <property type="match status" value="1"/>
</dbReference>
<dbReference type="InterPro" id="IPR003737">
    <property type="entry name" value="GlcNAc_PI_deacetylase-related"/>
</dbReference>
<dbReference type="InterPro" id="IPR024078">
    <property type="entry name" value="LmbE-like_dom_sf"/>
</dbReference>
<dbReference type="InterPro" id="IPR017810">
    <property type="entry name" value="Mycothiol_biosynthesis_MshB"/>
</dbReference>
<dbReference type="NCBIfam" id="TIGR03445">
    <property type="entry name" value="mycothiol_MshB"/>
    <property type="match status" value="1"/>
</dbReference>
<dbReference type="PANTHER" id="PTHR12993:SF26">
    <property type="entry name" value="1D-MYO-INOSITOL 2-ACETAMIDO-2-DEOXY-ALPHA-D-GLUCOPYRANOSIDE DEACETYLASE"/>
    <property type="match status" value="1"/>
</dbReference>
<dbReference type="PANTHER" id="PTHR12993">
    <property type="entry name" value="N-ACETYLGLUCOSAMINYL-PHOSPHATIDYLINOSITOL DE-N-ACETYLASE-RELATED"/>
    <property type="match status" value="1"/>
</dbReference>
<dbReference type="Pfam" id="PF02585">
    <property type="entry name" value="PIG-L"/>
    <property type="match status" value="1"/>
</dbReference>
<dbReference type="SUPFAM" id="SSF102588">
    <property type="entry name" value="LmbE-like"/>
    <property type="match status" value="1"/>
</dbReference>
<evidence type="ECO:0000255" key="1">
    <source>
        <dbReference type="HAMAP-Rule" id="MF_01696"/>
    </source>
</evidence>
<protein>
    <recommendedName>
        <fullName evidence="1">1D-myo-inositol 2-acetamido-2-deoxy-alpha-D-glucopyranoside deacetylase</fullName>
        <shortName evidence="1">GlcNAc-Ins deacetylase</shortName>
        <ecNumber evidence="1">3.5.1.103</ecNumber>
    </recommendedName>
    <alternativeName>
        <fullName>N-acetyl-1-D-myo-inositol 2-amino-2-deoxy-alpha-D-glucopyranoside deacetylase</fullName>
    </alternativeName>
</protein>
<name>MSHB_SALAI</name>
<comment type="function">
    <text evidence="1">Catalyzes the deacetylation of 1D-myo-inositol 2-acetamido-2-deoxy-alpha-D-glucopyranoside (GlcNAc-Ins) in the mycothiol biosynthesis pathway.</text>
</comment>
<comment type="catalytic activity">
    <reaction evidence="1">
        <text>1D-myo-inositol 2-acetamido-2-deoxy-alpha-D-glucopyranoside + H2O = 1D-myo-inositol 2-amino-2-deoxy-alpha-D-glucopyranoside + acetate</text>
        <dbReference type="Rhea" id="RHEA:26180"/>
        <dbReference type="ChEBI" id="CHEBI:15377"/>
        <dbReference type="ChEBI" id="CHEBI:30089"/>
        <dbReference type="ChEBI" id="CHEBI:52442"/>
        <dbReference type="ChEBI" id="CHEBI:58886"/>
        <dbReference type="EC" id="3.5.1.103"/>
    </reaction>
</comment>
<comment type="cofactor">
    <cofactor evidence="1">
        <name>Zn(2+)</name>
        <dbReference type="ChEBI" id="CHEBI:29105"/>
    </cofactor>
    <text evidence="1">Binds 1 zinc ion per subunit.</text>
</comment>
<comment type="similarity">
    <text evidence="1">Belongs to the MshB deacetylase family.</text>
</comment>